<comment type="function">
    <text evidence="1">Iron-storage protein.</text>
</comment>
<comment type="catalytic activity">
    <reaction>
        <text>4 Fe(2+) + O2 + 6 H2O = 4 iron(III) oxide-hydroxide + 12 H(+)</text>
        <dbReference type="Rhea" id="RHEA:11972"/>
        <dbReference type="ChEBI" id="CHEBI:15377"/>
        <dbReference type="ChEBI" id="CHEBI:15378"/>
        <dbReference type="ChEBI" id="CHEBI:15379"/>
        <dbReference type="ChEBI" id="CHEBI:29033"/>
        <dbReference type="ChEBI" id="CHEBI:78619"/>
        <dbReference type="EC" id="1.16.3.2"/>
    </reaction>
</comment>
<comment type="subcellular location">
    <subcellularLocation>
        <location evidence="1">Cytoplasm</location>
    </subcellularLocation>
</comment>
<comment type="similarity">
    <text evidence="3">Belongs to the ferritin family. Prokaryotic subfamily.</text>
</comment>
<reference key="1">
    <citation type="journal article" date="2002" name="Lancet">
        <title>Genome and virulence determinants of high virulence community-acquired MRSA.</title>
        <authorList>
            <person name="Baba T."/>
            <person name="Takeuchi F."/>
            <person name="Kuroda M."/>
            <person name="Yuzawa H."/>
            <person name="Aoki K."/>
            <person name="Oguchi A."/>
            <person name="Nagai Y."/>
            <person name="Iwama N."/>
            <person name="Asano K."/>
            <person name="Naimi T."/>
            <person name="Kuroda H."/>
            <person name="Cui L."/>
            <person name="Yamamoto K."/>
            <person name="Hiramatsu K."/>
        </authorList>
    </citation>
    <scope>NUCLEOTIDE SEQUENCE [LARGE SCALE GENOMIC DNA]</scope>
    <source>
        <strain>MW2</strain>
    </source>
</reference>
<name>FTN_STAAW</name>
<evidence type="ECO:0000250" key="1"/>
<evidence type="ECO:0000255" key="2">
    <source>
        <dbReference type="PROSITE-ProRule" id="PRU00085"/>
    </source>
</evidence>
<evidence type="ECO:0000305" key="3"/>
<organism>
    <name type="scientific">Staphylococcus aureus (strain MW2)</name>
    <dbReference type="NCBI Taxonomy" id="196620"/>
    <lineage>
        <taxon>Bacteria</taxon>
        <taxon>Bacillati</taxon>
        <taxon>Bacillota</taxon>
        <taxon>Bacilli</taxon>
        <taxon>Bacillales</taxon>
        <taxon>Staphylococcaceae</taxon>
        <taxon>Staphylococcus</taxon>
    </lineage>
</organism>
<protein>
    <recommendedName>
        <fullName>Bacterial non-heme ferritin</fullName>
        <ecNumber>1.16.3.2</ecNumber>
    </recommendedName>
</protein>
<proteinExistence type="inferred from homology"/>
<dbReference type="EC" id="1.16.3.2"/>
<dbReference type="EMBL" id="BA000033">
    <property type="protein sequence ID" value="BAB95699.1"/>
    <property type="molecule type" value="Genomic_DNA"/>
</dbReference>
<dbReference type="RefSeq" id="WP_000949467.1">
    <property type="nucleotide sequence ID" value="NC_003923.1"/>
</dbReference>
<dbReference type="SMR" id="Q7A0H5"/>
<dbReference type="KEGG" id="sam:MW1834"/>
<dbReference type="HOGENOM" id="CLU_065681_1_2_9"/>
<dbReference type="GO" id="GO:0005829">
    <property type="term" value="C:cytosol"/>
    <property type="evidence" value="ECO:0007669"/>
    <property type="project" value="TreeGrafter"/>
</dbReference>
<dbReference type="GO" id="GO:0008199">
    <property type="term" value="F:ferric iron binding"/>
    <property type="evidence" value="ECO:0007669"/>
    <property type="project" value="InterPro"/>
</dbReference>
<dbReference type="GO" id="GO:0008198">
    <property type="term" value="F:ferrous iron binding"/>
    <property type="evidence" value="ECO:0007669"/>
    <property type="project" value="TreeGrafter"/>
</dbReference>
<dbReference type="GO" id="GO:0004322">
    <property type="term" value="F:ferroxidase activity"/>
    <property type="evidence" value="ECO:0007669"/>
    <property type="project" value="TreeGrafter"/>
</dbReference>
<dbReference type="GO" id="GO:0006879">
    <property type="term" value="P:intracellular iron ion homeostasis"/>
    <property type="evidence" value="ECO:0007669"/>
    <property type="project" value="UniProtKB-KW"/>
</dbReference>
<dbReference type="GO" id="GO:0006826">
    <property type="term" value="P:iron ion transport"/>
    <property type="evidence" value="ECO:0007669"/>
    <property type="project" value="InterPro"/>
</dbReference>
<dbReference type="CDD" id="cd01055">
    <property type="entry name" value="Nonheme_Ferritin"/>
    <property type="match status" value="1"/>
</dbReference>
<dbReference type="FunFam" id="1.20.1260.10:FF:000001">
    <property type="entry name" value="Non-heme ferritin"/>
    <property type="match status" value="1"/>
</dbReference>
<dbReference type="Gene3D" id="1.20.1260.10">
    <property type="match status" value="1"/>
</dbReference>
<dbReference type="InterPro" id="IPR001519">
    <property type="entry name" value="Ferritin"/>
</dbReference>
<dbReference type="InterPro" id="IPR012347">
    <property type="entry name" value="Ferritin-like"/>
</dbReference>
<dbReference type="InterPro" id="IPR009040">
    <property type="entry name" value="Ferritin-like_diiron"/>
</dbReference>
<dbReference type="InterPro" id="IPR009078">
    <property type="entry name" value="Ferritin-like_SF"/>
</dbReference>
<dbReference type="InterPro" id="IPR008331">
    <property type="entry name" value="Ferritin_DPS_dom"/>
</dbReference>
<dbReference type="InterPro" id="IPR041719">
    <property type="entry name" value="Ferritin_prok"/>
</dbReference>
<dbReference type="PANTHER" id="PTHR11431:SF127">
    <property type="entry name" value="BACTERIAL NON-HEME FERRITIN"/>
    <property type="match status" value="1"/>
</dbReference>
<dbReference type="PANTHER" id="PTHR11431">
    <property type="entry name" value="FERRITIN"/>
    <property type="match status" value="1"/>
</dbReference>
<dbReference type="Pfam" id="PF00210">
    <property type="entry name" value="Ferritin"/>
    <property type="match status" value="1"/>
</dbReference>
<dbReference type="SUPFAM" id="SSF47240">
    <property type="entry name" value="Ferritin-like"/>
    <property type="match status" value="1"/>
</dbReference>
<dbReference type="PROSITE" id="PS50905">
    <property type="entry name" value="FERRITIN_LIKE"/>
    <property type="match status" value="1"/>
</dbReference>
<keyword id="KW-0963">Cytoplasm</keyword>
<keyword id="KW-0408">Iron</keyword>
<keyword id="KW-0409">Iron storage</keyword>
<keyword id="KW-0479">Metal-binding</keyword>
<keyword id="KW-0560">Oxidoreductase</keyword>
<gene>
    <name type="primary">ftnA</name>
    <name type="ordered locus">MW1834</name>
</gene>
<sequence>MLSKNLLEALNDQMNHEYFAAHAYMAMAAYCDKESYEGFANFFIQQAKEERFHGQKIYNYINDRGAHAEFRAVSAPKIDFSSILETFKDSLSQEQEVTRRFYNLSEIARQDKDYATISFLNWFLDEQVEEESMFETHINYLTRIGDDSNALYLYEKELGARTFDEE</sequence>
<accession>Q7A0H5</accession>
<feature type="initiator methionine" description="Removed" evidence="1">
    <location>
        <position position="1"/>
    </location>
</feature>
<feature type="chain" id="PRO_0000298968" description="Bacterial non-heme ferritin">
    <location>
        <begin position="2"/>
        <end position="166"/>
    </location>
</feature>
<feature type="domain" description="Ferritin-like diiron" evidence="2">
    <location>
        <begin position="2"/>
        <end position="145"/>
    </location>
</feature>
<feature type="binding site" evidence="2">
    <location>
        <position position="17"/>
    </location>
    <ligand>
        <name>Fe cation</name>
        <dbReference type="ChEBI" id="CHEBI:24875"/>
        <label>1</label>
    </ligand>
</feature>
<feature type="binding site" evidence="2">
    <location>
        <position position="50"/>
    </location>
    <ligand>
        <name>Fe cation</name>
        <dbReference type="ChEBI" id="CHEBI:24875"/>
        <label>1</label>
    </ligand>
</feature>
<feature type="binding site" evidence="2">
    <location>
        <position position="50"/>
    </location>
    <ligand>
        <name>Fe cation</name>
        <dbReference type="ChEBI" id="CHEBI:24875"/>
        <label>2</label>
    </ligand>
</feature>
<feature type="binding site" evidence="2">
    <location>
        <position position="53"/>
    </location>
    <ligand>
        <name>Fe cation</name>
        <dbReference type="ChEBI" id="CHEBI:24875"/>
        <label>1</label>
    </ligand>
</feature>
<feature type="binding site" evidence="2">
    <location>
        <position position="94"/>
    </location>
    <ligand>
        <name>Fe cation</name>
        <dbReference type="ChEBI" id="CHEBI:24875"/>
        <label>2</label>
    </ligand>
</feature>
<feature type="binding site" evidence="2">
    <location>
        <position position="127"/>
    </location>
    <ligand>
        <name>Fe cation</name>
        <dbReference type="ChEBI" id="CHEBI:24875"/>
        <label>2</label>
    </ligand>
</feature>